<organism>
    <name type="scientific">Flavobacterium psychrophilum (strain ATCC 49511 / DSM 21280 / CIP 103535 / JIP02/86)</name>
    <dbReference type="NCBI Taxonomy" id="402612"/>
    <lineage>
        <taxon>Bacteria</taxon>
        <taxon>Pseudomonadati</taxon>
        <taxon>Bacteroidota</taxon>
        <taxon>Flavobacteriia</taxon>
        <taxon>Flavobacteriales</taxon>
        <taxon>Flavobacteriaceae</taxon>
        <taxon>Flavobacterium</taxon>
    </lineage>
</organism>
<feature type="chain" id="PRO_0000335352" description="Ribosomal RNA small subunit methyltransferase G">
    <location>
        <begin position="1"/>
        <end position="209"/>
    </location>
</feature>
<feature type="binding site" evidence="1">
    <location>
        <position position="71"/>
    </location>
    <ligand>
        <name>S-adenosyl-L-methionine</name>
        <dbReference type="ChEBI" id="CHEBI:59789"/>
    </ligand>
</feature>
<feature type="binding site" evidence="1">
    <location>
        <position position="76"/>
    </location>
    <ligand>
        <name>S-adenosyl-L-methionine</name>
        <dbReference type="ChEBI" id="CHEBI:59789"/>
    </ligand>
</feature>
<feature type="binding site" evidence="1">
    <location>
        <begin position="122"/>
        <end position="123"/>
    </location>
    <ligand>
        <name>S-adenosyl-L-methionine</name>
        <dbReference type="ChEBI" id="CHEBI:59789"/>
    </ligand>
</feature>
<feature type="binding site" evidence="1">
    <location>
        <position position="135"/>
    </location>
    <ligand>
        <name>S-adenosyl-L-methionine</name>
        <dbReference type="ChEBI" id="CHEBI:59789"/>
    </ligand>
</feature>
<accession>A6GWQ2</accession>
<proteinExistence type="inferred from homology"/>
<reference key="1">
    <citation type="journal article" date="2007" name="Nat. Biotechnol.">
        <title>Complete genome sequence of the fish pathogen Flavobacterium psychrophilum.</title>
        <authorList>
            <person name="Duchaud E."/>
            <person name="Boussaha M."/>
            <person name="Loux V."/>
            <person name="Bernardet J.-F."/>
            <person name="Michel C."/>
            <person name="Kerouault B."/>
            <person name="Mondot S."/>
            <person name="Nicolas P."/>
            <person name="Bossy R."/>
            <person name="Caron C."/>
            <person name="Bessieres P."/>
            <person name="Gibrat J.-F."/>
            <person name="Claverol S."/>
            <person name="Dumetz F."/>
            <person name="Le Henaff M."/>
            <person name="Benmansour A."/>
        </authorList>
    </citation>
    <scope>NUCLEOTIDE SEQUENCE [LARGE SCALE GENOMIC DNA]</scope>
    <source>
        <strain>ATCC 49511 / DSM 21280 / CIP 103535 / JIP02/86</strain>
    </source>
</reference>
<gene>
    <name evidence="1" type="primary">rsmG</name>
    <name type="ordered locus">FP0414</name>
</gene>
<keyword id="KW-0963">Cytoplasm</keyword>
<keyword id="KW-0489">Methyltransferase</keyword>
<keyword id="KW-1185">Reference proteome</keyword>
<keyword id="KW-0698">rRNA processing</keyword>
<keyword id="KW-0949">S-adenosyl-L-methionine</keyword>
<keyword id="KW-0808">Transferase</keyword>
<protein>
    <recommendedName>
        <fullName evidence="1">Ribosomal RNA small subunit methyltransferase G</fullName>
        <ecNumber evidence="1">2.1.1.-</ecNumber>
    </recommendedName>
    <alternativeName>
        <fullName evidence="1">16S rRNA 7-methylguanosine methyltransferase</fullName>
        <shortName evidence="1">16S rRNA m7G methyltransferase</shortName>
    </alternativeName>
</protein>
<evidence type="ECO:0000255" key="1">
    <source>
        <dbReference type="HAMAP-Rule" id="MF_00074"/>
    </source>
</evidence>
<comment type="function">
    <text evidence="1">Specifically methylates the N7 position of a guanine in 16S rRNA.</text>
</comment>
<comment type="subcellular location">
    <subcellularLocation>
        <location evidence="1">Cytoplasm</location>
    </subcellularLocation>
</comment>
<comment type="similarity">
    <text evidence="1">Belongs to the methyltransferase superfamily. RNA methyltransferase RsmG family.</text>
</comment>
<sequence length="209" mass="24033">MEEILKHFPDLTNLQITQFEKLEALYQDWNAKINVISRKDIDELYTKHVLHSLAIAKIQKFEAGTYVLDVGTGGGFPGIPLAILFPETRFYLIDVILKKIKVVQAVAEALELKNVKAEQIRAENVKGDFDFIVSRAVTNMPDFVCWIKDKIKKTNKHELKNGILYLKGGDLTEELQDFPKAKEYNISEFFADDFFETKKVVHVPLKFKL</sequence>
<name>RSMG_FLAPJ</name>
<dbReference type="EC" id="2.1.1.-" evidence="1"/>
<dbReference type="EMBL" id="AM398681">
    <property type="protein sequence ID" value="CAL42525.1"/>
    <property type="molecule type" value="Genomic_DNA"/>
</dbReference>
<dbReference type="RefSeq" id="WP_011962583.1">
    <property type="nucleotide sequence ID" value="NC_009613.3"/>
</dbReference>
<dbReference type="RefSeq" id="YP_001295343.1">
    <property type="nucleotide sequence ID" value="NC_009613.3"/>
</dbReference>
<dbReference type="SMR" id="A6GWQ2"/>
<dbReference type="STRING" id="402612.FP0414"/>
<dbReference type="EnsemblBacteria" id="CAL42525">
    <property type="protein sequence ID" value="CAL42525"/>
    <property type="gene ID" value="FP0414"/>
</dbReference>
<dbReference type="GeneID" id="66551550"/>
<dbReference type="KEGG" id="fps:FP0414"/>
<dbReference type="PATRIC" id="fig|402612.5.peg.426"/>
<dbReference type="eggNOG" id="COG0357">
    <property type="taxonomic scope" value="Bacteria"/>
</dbReference>
<dbReference type="HOGENOM" id="CLU_065341_2_2_10"/>
<dbReference type="OrthoDB" id="9808773at2"/>
<dbReference type="Proteomes" id="UP000006394">
    <property type="component" value="Chromosome"/>
</dbReference>
<dbReference type="GO" id="GO:0005829">
    <property type="term" value="C:cytosol"/>
    <property type="evidence" value="ECO:0007669"/>
    <property type="project" value="TreeGrafter"/>
</dbReference>
<dbReference type="GO" id="GO:0070043">
    <property type="term" value="F:rRNA (guanine-N7-)-methyltransferase activity"/>
    <property type="evidence" value="ECO:0007669"/>
    <property type="project" value="UniProtKB-UniRule"/>
</dbReference>
<dbReference type="CDD" id="cd02440">
    <property type="entry name" value="AdoMet_MTases"/>
    <property type="match status" value="1"/>
</dbReference>
<dbReference type="Gene3D" id="3.40.50.150">
    <property type="entry name" value="Vaccinia Virus protein VP39"/>
    <property type="match status" value="1"/>
</dbReference>
<dbReference type="HAMAP" id="MF_00074">
    <property type="entry name" value="16SrRNA_methyltr_G"/>
    <property type="match status" value="1"/>
</dbReference>
<dbReference type="InterPro" id="IPR003682">
    <property type="entry name" value="rRNA_ssu_MeTfrase_G"/>
</dbReference>
<dbReference type="InterPro" id="IPR029063">
    <property type="entry name" value="SAM-dependent_MTases_sf"/>
</dbReference>
<dbReference type="NCBIfam" id="TIGR00138">
    <property type="entry name" value="rsmG_gidB"/>
    <property type="match status" value="1"/>
</dbReference>
<dbReference type="PANTHER" id="PTHR31760">
    <property type="entry name" value="S-ADENOSYL-L-METHIONINE-DEPENDENT METHYLTRANSFERASES SUPERFAMILY PROTEIN"/>
    <property type="match status" value="1"/>
</dbReference>
<dbReference type="PANTHER" id="PTHR31760:SF0">
    <property type="entry name" value="S-ADENOSYL-L-METHIONINE-DEPENDENT METHYLTRANSFERASES SUPERFAMILY PROTEIN"/>
    <property type="match status" value="1"/>
</dbReference>
<dbReference type="Pfam" id="PF02527">
    <property type="entry name" value="GidB"/>
    <property type="match status" value="1"/>
</dbReference>
<dbReference type="PIRSF" id="PIRSF003078">
    <property type="entry name" value="GidB"/>
    <property type="match status" value="1"/>
</dbReference>
<dbReference type="SUPFAM" id="SSF53335">
    <property type="entry name" value="S-adenosyl-L-methionine-dependent methyltransferases"/>
    <property type="match status" value="1"/>
</dbReference>